<dbReference type="EC" id="4.6.1.12" evidence="1"/>
<dbReference type="EMBL" id="AE015451">
    <property type="protein sequence ID" value="AAN67239.1"/>
    <property type="molecule type" value="Genomic_DNA"/>
</dbReference>
<dbReference type="RefSeq" id="NP_743775.1">
    <property type="nucleotide sequence ID" value="NC_002947.4"/>
</dbReference>
<dbReference type="RefSeq" id="WP_003252342.1">
    <property type="nucleotide sequence ID" value="NZ_CP169744.1"/>
</dbReference>
<dbReference type="SMR" id="Q88MF3"/>
<dbReference type="STRING" id="160488.PP_1618"/>
<dbReference type="PaxDb" id="160488-PP_1618"/>
<dbReference type="GeneID" id="83681903"/>
<dbReference type="KEGG" id="ppu:PP_1618"/>
<dbReference type="PATRIC" id="fig|160488.4.peg.1709"/>
<dbReference type="eggNOG" id="COG0245">
    <property type="taxonomic scope" value="Bacteria"/>
</dbReference>
<dbReference type="HOGENOM" id="CLU_084630_2_0_6"/>
<dbReference type="OrthoDB" id="9804336at2"/>
<dbReference type="PhylomeDB" id="Q88MF3"/>
<dbReference type="BioCyc" id="PPUT160488:G1G01-1715-MONOMER"/>
<dbReference type="UniPathway" id="UPA00056">
    <property type="reaction ID" value="UER00095"/>
</dbReference>
<dbReference type="Proteomes" id="UP000000556">
    <property type="component" value="Chromosome"/>
</dbReference>
<dbReference type="GO" id="GO:0008685">
    <property type="term" value="F:2-C-methyl-D-erythritol 2,4-cyclodiphosphate synthase activity"/>
    <property type="evidence" value="ECO:0007669"/>
    <property type="project" value="UniProtKB-UniRule"/>
</dbReference>
<dbReference type="GO" id="GO:0046872">
    <property type="term" value="F:metal ion binding"/>
    <property type="evidence" value="ECO:0007669"/>
    <property type="project" value="UniProtKB-KW"/>
</dbReference>
<dbReference type="GO" id="GO:0019288">
    <property type="term" value="P:isopentenyl diphosphate biosynthetic process, methylerythritol 4-phosphate pathway"/>
    <property type="evidence" value="ECO:0007669"/>
    <property type="project" value="UniProtKB-UniRule"/>
</dbReference>
<dbReference type="GO" id="GO:0016114">
    <property type="term" value="P:terpenoid biosynthetic process"/>
    <property type="evidence" value="ECO:0007669"/>
    <property type="project" value="InterPro"/>
</dbReference>
<dbReference type="CDD" id="cd00554">
    <property type="entry name" value="MECDP_synthase"/>
    <property type="match status" value="1"/>
</dbReference>
<dbReference type="FunFam" id="3.30.1330.50:FF:000001">
    <property type="entry name" value="2-C-methyl-D-erythritol 2,4-cyclodiphosphate synthase"/>
    <property type="match status" value="1"/>
</dbReference>
<dbReference type="Gene3D" id="3.30.1330.50">
    <property type="entry name" value="2-C-methyl-D-erythritol 2,4-cyclodiphosphate synthase"/>
    <property type="match status" value="1"/>
</dbReference>
<dbReference type="HAMAP" id="MF_00107">
    <property type="entry name" value="IspF"/>
    <property type="match status" value="1"/>
</dbReference>
<dbReference type="InterPro" id="IPR003526">
    <property type="entry name" value="MECDP_synthase"/>
</dbReference>
<dbReference type="InterPro" id="IPR020555">
    <property type="entry name" value="MECDP_synthase_CS"/>
</dbReference>
<dbReference type="InterPro" id="IPR036571">
    <property type="entry name" value="MECDP_synthase_sf"/>
</dbReference>
<dbReference type="NCBIfam" id="TIGR00151">
    <property type="entry name" value="ispF"/>
    <property type="match status" value="1"/>
</dbReference>
<dbReference type="PANTHER" id="PTHR43181">
    <property type="entry name" value="2-C-METHYL-D-ERYTHRITOL 2,4-CYCLODIPHOSPHATE SYNTHASE, CHLOROPLASTIC"/>
    <property type="match status" value="1"/>
</dbReference>
<dbReference type="PANTHER" id="PTHR43181:SF1">
    <property type="entry name" value="2-C-METHYL-D-ERYTHRITOL 2,4-CYCLODIPHOSPHATE SYNTHASE, CHLOROPLASTIC"/>
    <property type="match status" value="1"/>
</dbReference>
<dbReference type="Pfam" id="PF02542">
    <property type="entry name" value="YgbB"/>
    <property type="match status" value="1"/>
</dbReference>
<dbReference type="SUPFAM" id="SSF69765">
    <property type="entry name" value="IpsF-like"/>
    <property type="match status" value="1"/>
</dbReference>
<dbReference type="PROSITE" id="PS01350">
    <property type="entry name" value="ISPF"/>
    <property type="match status" value="1"/>
</dbReference>
<gene>
    <name evidence="1" type="primary">ispF</name>
    <name type="ordered locus">PP_1618</name>
</gene>
<proteinExistence type="inferred from homology"/>
<protein>
    <recommendedName>
        <fullName evidence="1">2-C-methyl-D-erythritol 2,4-cyclodiphosphate synthase</fullName>
        <shortName evidence="1">MECDP-synthase</shortName>
        <shortName evidence="1">MECPP-synthase</shortName>
        <shortName evidence="1">MECPS</shortName>
        <ecNumber evidence="1">4.6.1.12</ecNumber>
    </recommendedName>
</protein>
<evidence type="ECO:0000255" key="1">
    <source>
        <dbReference type="HAMAP-Rule" id="MF_00107"/>
    </source>
</evidence>
<reference key="1">
    <citation type="journal article" date="2002" name="Environ. Microbiol.">
        <title>Complete genome sequence and comparative analysis of the metabolically versatile Pseudomonas putida KT2440.</title>
        <authorList>
            <person name="Nelson K.E."/>
            <person name="Weinel C."/>
            <person name="Paulsen I.T."/>
            <person name="Dodson R.J."/>
            <person name="Hilbert H."/>
            <person name="Martins dos Santos V.A.P."/>
            <person name="Fouts D.E."/>
            <person name="Gill S.R."/>
            <person name="Pop M."/>
            <person name="Holmes M."/>
            <person name="Brinkac L.M."/>
            <person name="Beanan M.J."/>
            <person name="DeBoy R.T."/>
            <person name="Daugherty S.C."/>
            <person name="Kolonay J.F."/>
            <person name="Madupu R."/>
            <person name="Nelson W.C."/>
            <person name="White O."/>
            <person name="Peterson J.D."/>
            <person name="Khouri H.M."/>
            <person name="Hance I."/>
            <person name="Chris Lee P."/>
            <person name="Holtzapple E.K."/>
            <person name="Scanlan D."/>
            <person name="Tran K."/>
            <person name="Moazzez A."/>
            <person name="Utterback T.R."/>
            <person name="Rizzo M."/>
            <person name="Lee K."/>
            <person name="Kosack D."/>
            <person name="Moestl D."/>
            <person name="Wedler H."/>
            <person name="Lauber J."/>
            <person name="Stjepandic D."/>
            <person name="Hoheisel J."/>
            <person name="Straetz M."/>
            <person name="Heim S."/>
            <person name="Kiewitz C."/>
            <person name="Eisen J.A."/>
            <person name="Timmis K.N."/>
            <person name="Duesterhoeft A."/>
            <person name="Tuemmler B."/>
            <person name="Fraser C.M."/>
        </authorList>
    </citation>
    <scope>NUCLEOTIDE SEQUENCE [LARGE SCALE GENOMIC DNA]</scope>
    <source>
        <strain>ATCC 47054 / DSM 6125 / CFBP 8728 / NCIMB 11950 / KT2440</strain>
    </source>
</reference>
<keyword id="KW-0414">Isoprene biosynthesis</keyword>
<keyword id="KW-0456">Lyase</keyword>
<keyword id="KW-0479">Metal-binding</keyword>
<keyword id="KW-1185">Reference proteome</keyword>
<sequence>MRIGHGYDVHRFCDGDFITLGGVRIPHKYGLLAHSDGDVLLHALSDALLGAAALGDIGKHFPDTDPQFKGADSRALLRHVVGIVKAKGWKVGNVDATIVAQAPKMAPHIETMRQLIAEDLQVELDQVNVKATTTEKLGFTGREEGIAVHSVALLLPA</sequence>
<name>ISPF_PSEPK</name>
<accession>Q88MF3</accession>
<comment type="function">
    <text evidence="1">Involved in the biosynthesis of isopentenyl diphosphate (IPP) and dimethylallyl diphosphate (DMAPP), two major building blocks of isoprenoid compounds. Catalyzes the conversion of 4-diphosphocytidyl-2-C-methyl-D-erythritol 2-phosphate (CDP-ME2P) to 2-C-methyl-D-erythritol 2,4-cyclodiphosphate (ME-CPP) with a corresponding release of cytidine 5-monophosphate (CMP).</text>
</comment>
<comment type="catalytic activity">
    <reaction evidence="1">
        <text>4-CDP-2-C-methyl-D-erythritol 2-phosphate = 2-C-methyl-D-erythritol 2,4-cyclic diphosphate + CMP</text>
        <dbReference type="Rhea" id="RHEA:23864"/>
        <dbReference type="ChEBI" id="CHEBI:57919"/>
        <dbReference type="ChEBI" id="CHEBI:58483"/>
        <dbReference type="ChEBI" id="CHEBI:60377"/>
        <dbReference type="EC" id="4.6.1.12"/>
    </reaction>
</comment>
<comment type="cofactor">
    <cofactor evidence="1">
        <name>a divalent metal cation</name>
        <dbReference type="ChEBI" id="CHEBI:60240"/>
    </cofactor>
    <text evidence="1">Binds 1 divalent metal cation per subunit.</text>
</comment>
<comment type="pathway">
    <text evidence="1">Isoprenoid biosynthesis; isopentenyl diphosphate biosynthesis via DXP pathway; isopentenyl diphosphate from 1-deoxy-D-xylulose 5-phosphate: step 4/6.</text>
</comment>
<comment type="subunit">
    <text evidence="1">Homotrimer.</text>
</comment>
<comment type="similarity">
    <text evidence="1">Belongs to the IspF family.</text>
</comment>
<organism>
    <name type="scientific">Pseudomonas putida (strain ATCC 47054 / DSM 6125 / CFBP 8728 / NCIMB 11950 / KT2440)</name>
    <dbReference type="NCBI Taxonomy" id="160488"/>
    <lineage>
        <taxon>Bacteria</taxon>
        <taxon>Pseudomonadati</taxon>
        <taxon>Pseudomonadota</taxon>
        <taxon>Gammaproteobacteria</taxon>
        <taxon>Pseudomonadales</taxon>
        <taxon>Pseudomonadaceae</taxon>
        <taxon>Pseudomonas</taxon>
    </lineage>
</organism>
<feature type="chain" id="PRO_0000189496" description="2-C-methyl-D-erythritol 2,4-cyclodiphosphate synthase">
    <location>
        <begin position="1"/>
        <end position="157"/>
    </location>
</feature>
<feature type="binding site" evidence="1">
    <location>
        <begin position="8"/>
        <end position="10"/>
    </location>
    <ligand>
        <name>4-CDP-2-C-methyl-D-erythritol 2-phosphate</name>
        <dbReference type="ChEBI" id="CHEBI:57919"/>
    </ligand>
</feature>
<feature type="binding site" evidence="1">
    <location>
        <position position="8"/>
    </location>
    <ligand>
        <name>a divalent metal cation</name>
        <dbReference type="ChEBI" id="CHEBI:60240"/>
    </ligand>
</feature>
<feature type="binding site" evidence="1">
    <location>
        <position position="10"/>
    </location>
    <ligand>
        <name>a divalent metal cation</name>
        <dbReference type="ChEBI" id="CHEBI:60240"/>
    </ligand>
</feature>
<feature type="binding site" evidence="1">
    <location>
        <begin position="34"/>
        <end position="35"/>
    </location>
    <ligand>
        <name>4-CDP-2-C-methyl-D-erythritol 2-phosphate</name>
        <dbReference type="ChEBI" id="CHEBI:57919"/>
    </ligand>
</feature>
<feature type="binding site" evidence="1">
    <location>
        <position position="42"/>
    </location>
    <ligand>
        <name>a divalent metal cation</name>
        <dbReference type="ChEBI" id="CHEBI:60240"/>
    </ligand>
</feature>
<feature type="binding site" evidence="1">
    <location>
        <begin position="56"/>
        <end position="58"/>
    </location>
    <ligand>
        <name>4-CDP-2-C-methyl-D-erythritol 2-phosphate</name>
        <dbReference type="ChEBI" id="CHEBI:57919"/>
    </ligand>
</feature>
<feature type="binding site" evidence="1">
    <location>
        <begin position="61"/>
        <end position="65"/>
    </location>
    <ligand>
        <name>4-CDP-2-C-methyl-D-erythritol 2-phosphate</name>
        <dbReference type="ChEBI" id="CHEBI:57919"/>
    </ligand>
</feature>
<feature type="binding site" evidence="1">
    <location>
        <begin position="100"/>
        <end position="106"/>
    </location>
    <ligand>
        <name>4-CDP-2-C-methyl-D-erythritol 2-phosphate</name>
        <dbReference type="ChEBI" id="CHEBI:57919"/>
    </ligand>
</feature>
<feature type="binding site" evidence="1">
    <location>
        <begin position="132"/>
        <end position="135"/>
    </location>
    <ligand>
        <name>4-CDP-2-C-methyl-D-erythritol 2-phosphate</name>
        <dbReference type="ChEBI" id="CHEBI:57919"/>
    </ligand>
</feature>
<feature type="binding site" evidence="1">
    <location>
        <position position="139"/>
    </location>
    <ligand>
        <name>4-CDP-2-C-methyl-D-erythritol 2-phosphate</name>
        <dbReference type="ChEBI" id="CHEBI:57919"/>
    </ligand>
</feature>
<feature type="binding site" evidence="1">
    <location>
        <position position="142"/>
    </location>
    <ligand>
        <name>4-CDP-2-C-methyl-D-erythritol 2-phosphate</name>
        <dbReference type="ChEBI" id="CHEBI:57919"/>
    </ligand>
</feature>
<feature type="site" description="Transition state stabilizer" evidence="1">
    <location>
        <position position="34"/>
    </location>
</feature>
<feature type="site" description="Transition state stabilizer" evidence="1">
    <location>
        <position position="133"/>
    </location>
</feature>